<proteinExistence type="inferred from homology"/>
<feature type="chain" id="PRO_0000177221" description="Large ribosomal subunit protein bL20">
    <location>
        <begin position="1"/>
        <end position="118"/>
    </location>
</feature>
<evidence type="ECO:0000255" key="1">
    <source>
        <dbReference type="HAMAP-Rule" id="MF_00382"/>
    </source>
</evidence>
<evidence type="ECO:0000305" key="2"/>
<keyword id="KW-1185">Reference proteome</keyword>
<keyword id="KW-0687">Ribonucleoprotein</keyword>
<keyword id="KW-0689">Ribosomal protein</keyword>
<keyword id="KW-0694">RNA-binding</keyword>
<keyword id="KW-0699">rRNA-binding</keyword>
<name>RL20_SHEON</name>
<comment type="function">
    <text evidence="1">Binds directly to 23S ribosomal RNA and is necessary for the in vitro assembly process of the 50S ribosomal subunit. It is not involved in the protein synthesizing functions of that subunit.</text>
</comment>
<comment type="similarity">
    <text evidence="1">Belongs to the bacterial ribosomal protein bL20 family.</text>
</comment>
<gene>
    <name evidence="1" type="primary">rplT</name>
    <name type="ordered locus">SO_2302</name>
</gene>
<protein>
    <recommendedName>
        <fullName evidence="1">Large ribosomal subunit protein bL20</fullName>
    </recommendedName>
    <alternativeName>
        <fullName evidence="2">50S ribosomal protein L20</fullName>
    </alternativeName>
</protein>
<organism>
    <name type="scientific">Shewanella oneidensis (strain ATCC 700550 / JCM 31522 / CIP 106686 / LMG 19005 / NCIMB 14063 / MR-1)</name>
    <dbReference type="NCBI Taxonomy" id="211586"/>
    <lineage>
        <taxon>Bacteria</taxon>
        <taxon>Pseudomonadati</taxon>
        <taxon>Pseudomonadota</taxon>
        <taxon>Gammaproteobacteria</taxon>
        <taxon>Alteromonadales</taxon>
        <taxon>Shewanellaceae</taxon>
        <taxon>Shewanella</taxon>
    </lineage>
</organism>
<accession>Q8EER6</accession>
<reference key="1">
    <citation type="journal article" date="2002" name="Nat. Biotechnol.">
        <title>Genome sequence of the dissimilatory metal ion-reducing bacterium Shewanella oneidensis.</title>
        <authorList>
            <person name="Heidelberg J.F."/>
            <person name="Paulsen I.T."/>
            <person name="Nelson K.E."/>
            <person name="Gaidos E.J."/>
            <person name="Nelson W.C."/>
            <person name="Read T.D."/>
            <person name="Eisen J.A."/>
            <person name="Seshadri R."/>
            <person name="Ward N.L."/>
            <person name="Methe B.A."/>
            <person name="Clayton R.A."/>
            <person name="Meyer T."/>
            <person name="Tsapin A."/>
            <person name="Scott J."/>
            <person name="Beanan M.J."/>
            <person name="Brinkac L.M."/>
            <person name="Daugherty S.C."/>
            <person name="DeBoy R.T."/>
            <person name="Dodson R.J."/>
            <person name="Durkin A.S."/>
            <person name="Haft D.H."/>
            <person name="Kolonay J.F."/>
            <person name="Madupu R."/>
            <person name="Peterson J.D."/>
            <person name="Umayam L.A."/>
            <person name="White O."/>
            <person name="Wolf A.M."/>
            <person name="Vamathevan J.J."/>
            <person name="Weidman J.F."/>
            <person name="Impraim M."/>
            <person name="Lee K."/>
            <person name="Berry K.J."/>
            <person name="Lee C."/>
            <person name="Mueller J."/>
            <person name="Khouri H.M."/>
            <person name="Gill J."/>
            <person name="Utterback T.R."/>
            <person name="McDonald L.A."/>
            <person name="Feldblyum T.V."/>
            <person name="Smith H.O."/>
            <person name="Venter J.C."/>
            <person name="Nealson K.H."/>
            <person name="Fraser C.M."/>
        </authorList>
    </citation>
    <scope>NUCLEOTIDE SEQUENCE [LARGE SCALE GENOMIC DNA]</scope>
    <source>
        <strain>ATCC 700550 / JCM 31522 / CIP 106686 / LMG 19005 / NCIMB 14063 / MR-1</strain>
    </source>
</reference>
<sequence length="118" mass="13567">MPRVKRGVTARARHKKVLKLAKGYYGARSRTYRVAVQAVTKAGQYAYRDRRQKKRQFRQLWIARINAAARQNGLSYSRFINGLKKASIEIDRKILADIAVFDKVVFATLVEKAKEALN</sequence>
<dbReference type="EMBL" id="AE014299">
    <property type="protein sequence ID" value="AAN55342.1"/>
    <property type="molecule type" value="Genomic_DNA"/>
</dbReference>
<dbReference type="RefSeq" id="NP_717898.1">
    <property type="nucleotide sequence ID" value="NC_004347.2"/>
</dbReference>
<dbReference type="RefSeq" id="WP_006081652.1">
    <property type="nucleotide sequence ID" value="NZ_CP053946.1"/>
</dbReference>
<dbReference type="SMR" id="Q8EER6"/>
<dbReference type="STRING" id="211586.SO_2302"/>
<dbReference type="PaxDb" id="211586-SO_2302"/>
<dbReference type="GeneID" id="94727990"/>
<dbReference type="KEGG" id="son:SO_2302"/>
<dbReference type="PATRIC" id="fig|211586.12.peg.2217"/>
<dbReference type="eggNOG" id="COG0292">
    <property type="taxonomic scope" value="Bacteria"/>
</dbReference>
<dbReference type="HOGENOM" id="CLU_123265_0_1_6"/>
<dbReference type="OrthoDB" id="9808966at2"/>
<dbReference type="PhylomeDB" id="Q8EER6"/>
<dbReference type="BioCyc" id="SONE211586:G1GMP-2104-MONOMER"/>
<dbReference type="PRO" id="PR:Q8EER6"/>
<dbReference type="Proteomes" id="UP000008186">
    <property type="component" value="Chromosome"/>
</dbReference>
<dbReference type="GO" id="GO:0022625">
    <property type="term" value="C:cytosolic large ribosomal subunit"/>
    <property type="evidence" value="ECO:0000318"/>
    <property type="project" value="GO_Central"/>
</dbReference>
<dbReference type="GO" id="GO:0019843">
    <property type="term" value="F:rRNA binding"/>
    <property type="evidence" value="ECO:0007669"/>
    <property type="project" value="UniProtKB-UniRule"/>
</dbReference>
<dbReference type="GO" id="GO:0003735">
    <property type="term" value="F:structural constituent of ribosome"/>
    <property type="evidence" value="ECO:0000318"/>
    <property type="project" value="GO_Central"/>
</dbReference>
<dbReference type="GO" id="GO:0000027">
    <property type="term" value="P:ribosomal large subunit assembly"/>
    <property type="evidence" value="ECO:0007669"/>
    <property type="project" value="UniProtKB-UniRule"/>
</dbReference>
<dbReference type="GO" id="GO:0006412">
    <property type="term" value="P:translation"/>
    <property type="evidence" value="ECO:0007669"/>
    <property type="project" value="InterPro"/>
</dbReference>
<dbReference type="CDD" id="cd07026">
    <property type="entry name" value="Ribosomal_L20"/>
    <property type="match status" value="1"/>
</dbReference>
<dbReference type="FunFam" id="1.10.1900.20:FF:000001">
    <property type="entry name" value="50S ribosomal protein L20"/>
    <property type="match status" value="1"/>
</dbReference>
<dbReference type="Gene3D" id="6.10.160.10">
    <property type="match status" value="1"/>
</dbReference>
<dbReference type="Gene3D" id="1.10.1900.20">
    <property type="entry name" value="Ribosomal protein L20"/>
    <property type="match status" value="1"/>
</dbReference>
<dbReference type="HAMAP" id="MF_00382">
    <property type="entry name" value="Ribosomal_bL20"/>
    <property type="match status" value="1"/>
</dbReference>
<dbReference type="InterPro" id="IPR005813">
    <property type="entry name" value="Ribosomal_bL20"/>
</dbReference>
<dbReference type="InterPro" id="IPR049946">
    <property type="entry name" value="RIBOSOMAL_L20_CS"/>
</dbReference>
<dbReference type="InterPro" id="IPR035566">
    <property type="entry name" value="Ribosomal_protein_bL20_C"/>
</dbReference>
<dbReference type="NCBIfam" id="TIGR01032">
    <property type="entry name" value="rplT_bact"/>
    <property type="match status" value="1"/>
</dbReference>
<dbReference type="PANTHER" id="PTHR10986">
    <property type="entry name" value="39S RIBOSOMAL PROTEIN L20"/>
    <property type="match status" value="1"/>
</dbReference>
<dbReference type="Pfam" id="PF00453">
    <property type="entry name" value="Ribosomal_L20"/>
    <property type="match status" value="1"/>
</dbReference>
<dbReference type="PRINTS" id="PR00062">
    <property type="entry name" value="RIBOSOMALL20"/>
</dbReference>
<dbReference type="SUPFAM" id="SSF74731">
    <property type="entry name" value="Ribosomal protein L20"/>
    <property type="match status" value="1"/>
</dbReference>
<dbReference type="PROSITE" id="PS00937">
    <property type="entry name" value="RIBOSOMAL_L20"/>
    <property type="match status" value="1"/>
</dbReference>